<feature type="chain" id="PRO_0000375636" description="Succinyl-diaminopimelate desuccinylase">
    <location>
        <begin position="1"/>
        <end position="384"/>
    </location>
</feature>
<feature type="active site" evidence="1">
    <location>
        <position position="73"/>
    </location>
</feature>
<feature type="active site" description="Proton acceptor" evidence="1">
    <location>
        <position position="139"/>
    </location>
</feature>
<feature type="binding site" evidence="1">
    <location>
        <position position="71"/>
    </location>
    <ligand>
        <name>Zn(2+)</name>
        <dbReference type="ChEBI" id="CHEBI:29105"/>
        <label>1</label>
    </ligand>
</feature>
<feature type="binding site" evidence="1">
    <location>
        <position position="104"/>
    </location>
    <ligand>
        <name>Zn(2+)</name>
        <dbReference type="ChEBI" id="CHEBI:29105"/>
        <label>1</label>
    </ligand>
</feature>
<feature type="binding site" evidence="1">
    <location>
        <position position="104"/>
    </location>
    <ligand>
        <name>Zn(2+)</name>
        <dbReference type="ChEBI" id="CHEBI:29105"/>
        <label>2</label>
    </ligand>
</feature>
<feature type="binding site" evidence="1">
    <location>
        <position position="140"/>
    </location>
    <ligand>
        <name>Zn(2+)</name>
        <dbReference type="ChEBI" id="CHEBI:29105"/>
        <label>2</label>
    </ligand>
</feature>
<feature type="binding site" evidence="1">
    <location>
        <position position="168"/>
    </location>
    <ligand>
        <name>Zn(2+)</name>
        <dbReference type="ChEBI" id="CHEBI:29105"/>
        <label>1</label>
    </ligand>
</feature>
<feature type="binding site" evidence="1">
    <location>
        <position position="357"/>
    </location>
    <ligand>
        <name>Zn(2+)</name>
        <dbReference type="ChEBI" id="CHEBI:29105"/>
        <label>2</label>
    </ligand>
</feature>
<name>DAPE_AFIC5</name>
<reference key="1">
    <citation type="journal article" date="2008" name="J. Bacteriol.">
        <title>Genome sequence of the chemolithoautotrophic bacterium Oligotropha carboxidovorans OM5T.</title>
        <authorList>
            <person name="Paul D."/>
            <person name="Bridges S."/>
            <person name="Burgess S.C."/>
            <person name="Dandass Y."/>
            <person name="Lawrence M.L."/>
        </authorList>
    </citation>
    <scope>NUCLEOTIDE SEQUENCE [LARGE SCALE GENOMIC DNA]</scope>
    <source>
        <strain>ATCC 49405 / DSM 1227 / KCTC 32145 / OM5</strain>
    </source>
</reference>
<reference key="2">
    <citation type="journal article" date="2011" name="J. Bacteriol.">
        <title>Complete genome sequences of the chemolithoautotrophic Oligotropha carboxidovorans strains OM4 and OM5.</title>
        <authorList>
            <person name="Volland S."/>
            <person name="Rachinger M."/>
            <person name="Strittmatter A."/>
            <person name="Daniel R."/>
            <person name="Gottschalk G."/>
            <person name="Meyer O."/>
        </authorList>
    </citation>
    <scope>NUCLEOTIDE SEQUENCE [LARGE SCALE GENOMIC DNA]</scope>
    <source>
        <strain>ATCC 49405 / DSM 1227 / KCTC 32145 / OM5</strain>
    </source>
</reference>
<organism>
    <name type="scientific">Afipia carboxidovorans (strain ATCC 49405 / DSM 1227 / KCTC 32145 / OM5)</name>
    <name type="common">Oligotropha carboxidovorans</name>
    <dbReference type="NCBI Taxonomy" id="504832"/>
    <lineage>
        <taxon>Bacteria</taxon>
        <taxon>Pseudomonadati</taxon>
        <taxon>Pseudomonadota</taxon>
        <taxon>Alphaproteobacteria</taxon>
        <taxon>Hyphomicrobiales</taxon>
        <taxon>Nitrobacteraceae</taxon>
        <taxon>Afipia</taxon>
    </lineage>
</organism>
<sequence>MSKALDIARDLLACPSVTPADAGALGVLEKLLKDAGFETYRLTFSEPGADDTDNLYARIGAGHPHITFAGHTDVVPPGDNAAWSHDAFAATVDGGVLYGRGAVDMKGAIACAAAAVLDYLEANGGKPKGSISFLITGDEEGPAVNGTVKLLDWAAKRGEKFDHCLLGEPSNVNALGDCIKAGRRGSLSGTLIVEGKQGHAAYPDRAHNPLPEIASLVAALDADPLDQGSDHFPPSNLEFLSIDTGNPAWNVIPAQARARFNIRHNDCRTQDALRALIEARVEKLTGNRITARIEWEPSNADAFLTQPGAFTDLVIDAIEEVTGRKPKLDTGGGTSDARFITHYCPVLEFGLVGQTMHQIDERTPVADLDALTQIYRGVLTRYFK</sequence>
<evidence type="ECO:0000255" key="1">
    <source>
        <dbReference type="HAMAP-Rule" id="MF_01690"/>
    </source>
</evidence>
<keyword id="KW-0028">Amino-acid biosynthesis</keyword>
<keyword id="KW-0170">Cobalt</keyword>
<keyword id="KW-0220">Diaminopimelate biosynthesis</keyword>
<keyword id="KW-0378">Hydrolase</keyword>
<keyword id="KW-0457">Lysine biosynthesis</keyword>
<keyword id="KW-0479">Metal-binding</keyword>
<keyword id="KW-1185">Reference proteome</keyword>
<keyword id="KW-0862">Zinc</keyword>
<proteinExistence type="inferred from homology"/>
<protein>
    <recommendedName>
        <fullName evidence="1">Succinyl-diaminopimelate desuccinylase</fullName>
        <shortName evidence="1">SDAP desuccinylase</shortName>
        <ecNumber evidence="1">3.5.1.18</ecNumber>
    </recommendedName>
    <alternativeName>
        <fullName evidence="1">N-succinyl-LL-2,6-diaminoheptanedioate amidohydrolase</fullName>
    </alternativeName>
</protein>
<comment type="function">
    <text evidence="1">Catalyzes the hydrolysis of N-succinyl-L,L-diaminopimelic acid (SDAP), forming succinate and LL-2,6-diaminopimelate (DAP), an intermediate involved in the bacterial biosynthesis of lysine and meso-diaminopimelic acid, an essential component of bacterial cell walls.</text>
</comment>
<comment type="catalytic activity">
    <reaction evidence="1">
        <text>N-succinyl-(2S,6S)-2,6-diaminopimelate + H2O = (2S,6S)-2,6-diaminopimelate + succinate</text>
        <dbReference type="Rhea" id="RHEA:22608"/>
        <dbReference type="ChEBI" id="CHEBI:15377"/>
        <dbReference type="ChEBI" id="CHEBI:30031"/>
        <dbReference type="ChEBI" id="CHEBI:57609"/>
        <dbReference type="ChEBI" id="CHEBI:58087"/>
        <dbReference type="EC" id="3.5.1.18"/>
    </reaction>
</comment>
<comment type="cofactor">
    <cofactor evidence="1">
        <name>Zn(2+)</name>
        <dbReference type="ChEBI" id="CHEBI:29105"/>
    </cofactor>
    <cofactor evidence="1">
        <name>Co(2+)</name>
        <dbReference type="ChEBI" id="CHEBI:48828"/>
    </cofactor>
    <text evidence="1">Binds 2 Zn(2+) or Co(2+) ions per subunit.</text>
</comment>
<comment type="pathway">
    <text evidence="1">Amino-acid biosynthesis; L-lysine biosynthesis via DAP pathway; LL-2,6-diaminopimelate from (S)-tetrahydrodipicolinate (succinylase route): step 3/3.</text>
</comment>
<comment type="subunit">
    <text evidence="1">Homodimer.</text>
</comment>
<comment type="similarity">
    <text evidence="1">Belongs to the peptidase M20A family. DapE subfamily.</text>
</comment>
<accession>B6JJP4</accession>
<accession>F8BWX6</accession>
<gene>
    <name evidence="1" type="primary">dapE</name>
    <name type="ordered locus">OCAR_7536</name>
    <name type="ordered locus">OCA5_c06040</name>
</gene>
<dbReference type="EC" id="3.5.1.18" evidence="1"/>
<dbReference type="EMBL" id="CP001196">
    <property type="protein sequence ID" value="ACI94638.1"/>
    <property type="molecule type" value="Genomic_DNA"/>
</dbReference>
<dbReference type="EMBL" id="CP002826">
    <property type="protein sequence ID" value="AEI05328.1"/>
    <property type="molecule type" value="Genomic_DNA"/>
</dbReference>
<dbReference type="RefSeq" id="WP_012564662.1">
    <property type="nucleotide sequence ID" value="NC_015684.1"/>
</dbReference>
<dbReference type="SMR" id="B6JJP4"/>
<dbReference type="STRING" id="504832.OCA5_c06040"/>
<dbReference type="KEGG" id="oca:OCAR_7536"/>
<dbReference type="KEGG" id="ocg:OCA5_c06040"/>
<dbReference type="PATRIC" id="fig|504832.7.peg.632"/>
<dbReference type="eggNOG" id="COG0624">
    <property type="taxonomic scope" value="Bacteria"/>
</dbReference>
<dbReference type="HOGENOM" id="CLU_021802_4_0_5"/>
<dbReference type="OrthoDB" id="9809784at2"/>
<dbReference type="UniPathway" id="UPA00034">
    <property type="reaction ID" value="UER00021"/>
</dbReference>
<dbReference type="Proteomes" id="UP000007730">
    <property type="component" value="Chromosome"/>
</dbReference>
<dbReference type="GO" id="GO:0008777">
    <property type="term" value="F:acetylornithine deacetylase activity"/>
    <property type="evidence" value="ECO:0007669"/>
    <property type="project" value="TreeGrafter"/>
</dbReference>
<dbReference type="GO" id="GO:0050897">
    <property type="term" value="F:cobalt ion binding"/>
    <property type="evidence" value="ECO:0007669"/>
    <property type="project" value="UniProtKB-UniRule"/>
</dbReference>
<dbReference type="GO" id="GO:0009014">
    <property type="term" value="F:succinyl-diaminopimelate desuccinylase activity"/>
    <property type="evidence" value="ECO:0007669"/>
    <property type="project" value="UniProtKB-UniRule"/>
</dbReference>
<dbReference type="GO" id="GO:0008270">
    <property type="term" value="F:zinc ion binding"/>
    <property type="evidence" value="ECO:0007669"/>
    <property type="project" value="UniProtKB-UniRule"/>
</dbReference>
<dbReference type="GO" id="GO:0019877">
    <property type="term" value="P:diaminopimelate biosynthetic process"/>
    <property type="evidence" value="ECO:0007669"/>
    <property type="project" value="UniProtKB-UniRule"/>
</dbReference>
<dbReference type="GO" id="GO:0006526">
    <property type="term" value="P:L-arginine biosynthetic process"/>
    <property type="evidence" value="ECO:0007669"/>
    <property type="project" value="TreeGrafter"/>
</dbReference>
<dbReference type="GO" id="GO:0009089">
    <property type="term" value="P:lysine biosynthetic process via diaminopimelate"/>
    <property type="evidence" value="ECO:0007669"/>
    <property type="project" value="UniProtKB-UniRule"/>
</dbReference>
<dbReference type="CDD" id="cd03891">
    <property type="entry name" value="M20_DapE_proteobac"/>
    <property type="match status" value="1"/>
</dbReference>
<dbReference type="Gene3D" id="3.40.630.10">
    <property type="entry name" value="Zn peptidases"/>
    <property type="match status" value="2"/>
</dbReference>
<dbReference type="HAMAP" id="MF_01690">
    <property type="entry name" value="DapE"/>
    <property type="match status" value="1"/>
</dbReference>
<dbReference type="InterPro" id="IPR036264">
    <property type="entry name" value="Bact_exopeptidase_dim_dom"/>
</dbReference>
<dbReference type="InterPro" id="IPR005941">
    <property type="entry name" value="DapE_proteobac"/>
</dbReference>
<dbReference type="InterPro" id="IPR002933">
    <property type="entry name" value="Peptidase_M20"/>
</dbReference>
<dbReference type="InterPro" id="IPR011650">
    <property type="entry name" value="Peptidase_M20_dimer"/>
</dbReference>
<dbReference type="InterPro" id="IPR050072">
    <property type="entry name" value="Peptidase_M20A"/>
</dbReference>
<dbReference type="NCBIfam" id="TIGR01246">
    <property type="entry name" value="dapE_proteo"/>
    <property type="match status" value="1"/>
</dbReference>
<dbReference type="NCBIfam" id="NF009557">
    <property type="entry name" value="PRK13009.1"/>
    <property type="match status" value="1"/>
</dbReference>
<dbReference type="PANTHER" id="PTHR43808">
    <property type="entry name" value="ACETYLORNITHINE DEACETYLASE"/>
    <property type="match status" value="1"/>
</dbReference>
<dbReference type="PANTHER" id="PTHR43808:SF31">
    <property type="entry name" value="N-ACETYL-L-CITRULLINE DEACETYLASE"/>
    <property type="match status" value="1"/>
</dbReference>
<dbReference type="Pfam" id="PF07687">
    <property type="entry name" value="M20_dimer"/>
    <property type="match status" value="1"/>
</dbReference>
<dbReference type="Pfam" id="PF01546">
    <property type="entry name" value="Peptidase_M20"/>
    <property type="match status" value="1"/>
</dbReference>
<dbReference type="SUPFAM" id="SSF55031">
    <property type="entry name" value="Bacterial exopeptidase dimerisation domain"/>
    <property type="match status" value="1"/>
</dbReference>
<dbReference type="SUPFAM" id="SSF53187">
    <property type="entry name" value="Zn-dependent exopeptidases"/>
    <property type="match status" value="1"/>
</dbReference>